<name>PYRG_BACAH</name>
<gene>
    <name evidence="1" type="primary">pyrG</name>
    <name type="ordered locus">BALH_4836</name>
</gene>
<evidence type="ECO:0000255" key="1">
    <source>
        <dbReference type="HAMAP-Rule" id="MF_01227"/>
    </source>
</evidence>
<proteinExistence type="inferred from homology"/>
<keyword id="KW-0067">ATP-binding</keyword>
<keyword id="KW-0315">Glutamine amidotransferase</keyword>
<keyword id="KW-0436">Ligase</keyword>
<keyword id="KW-0460">Magnesium</keyword>
<keyword id="KW-0479">Metal-binding</keyword>
<keyword id="KW-0547">Nucleotide-binding</keyword>
<keyword id="KW-0665">Pyrimidine biosynthesis</keyword>
<organism>
    <name type="scientific">Bacillus thuringiensis (strain Al Hakam)</name>
    <dbReference type="NCBI Taxonomy" id="412694"/>
    <lineage>
        <taxon>Bacteria</taxon>
        <taxon>Bacillati</taxon>
        <taxon>Bacillota</taxon>
        <taxon>Bacilli</taxon>
        <taxon>Bacillales</taxon>
        <taxon>Bacillaceae</taxon>
        <taxon>Bacillus</taxon>
        <taxon>Bacillus cereus group</taxon>
    </lineage>
</organism>
<protein>
    <recommendedName>
        <fullName evidence="1">CTP synthase</fullName>
        <ecNumber evidence="1">6.3.4.2</ecNumber>
    </recommendedName>
    <alternativeName>
        <fullName evidence="1">Cytidine 5'-triphosphate synthase</fullName>
    </alternativeName>
    <alternativeName>
        <fullName evidence="1">Cytidine triphosphate synthetase</fullName>
        <shortName evidence="1">CTP synthetase</shortName>
        <shortName evidence="1">CTPS</shortName>
    </alternativeName>
    <alternativeName>
        <fullName evidence="1">UTP--ammonia ligase</fullName>
    </alternativeName>
</protein>
<comment type="function">
    <text evidence="1">Catalyzes the ATP-dependent amination of UTP to CTP with either L-glutamine or ammonia as the source of nitrogen. Regulates intracellular CTP levels through interactions with the four ribonucleotide triphosphates.</text>
</comment>
<comment type="catalytic activity">
    <reaction evidence="1">
        <text>UTP + L-glutamine + ATP + H2O = CTP + L-glutamate + ADP + phosphate + 2 H(+)</text>
        <dbReference type="Rhea" id="RHEA:26426"/>
        <dbReference type="ChEBI" id="CHEBI:15377"/>
        <dbReference type="ChEBI" id="CHEBI:15378"/>
        <dbReference type="ChEBI" id="CHEBI:29985"/>
        <dbReference type="ChEBI" id="CHEBI:30616"/>
        <dbReference type="ChEBI" id="CHEBI:37563"/>
        <dbReference type="ChEBI" id="CHEBI:43474"/>
        <dbReference type="ChEBI" id="CHEBI:46398"/>
        <dbReference type="ChEBI" id="CHEBI:58359"/>
        <dbReference type="ChEBI" id="CHEBI:456216"/>
        <dbReference type="EC" id="6.3.4.2"/>
    </reaction>
</comment>
<comment type="catalytic activity">
    <reaction evidence="1">
        <text>L-glutamine + H2O = L-glutamate + NH4(+)</text>
        <dbReference type="Rhea" id="RHEA:15889"/>
        <dbReference type="ChEBI" id="CHEBI:15377"/>
        <dbReference type="ChEBI" id="CHEBI:28938"/>
        <dbReference type="ChEBI" id="CHEBI:29985"/>
        <dbReference type="ChEBI" id="CHEBI:58359"/>
    </reaction>
</comment>
<comment type="catalytic activity">
    <reaction evidence="1">
        <text>UTP + NH4(+) + ATP = CTP + ADP + phosphate + 2 H(+)</text>
        <dbReference type="Rhea" id="RHEA:16597"/>
        <dbReference type="ChEBI" id="CHEBI:15378"/>
        <dbReference type="ChEBI" id="CHEBI:28938"/>
        <dbReference type="ChEBI" id="CHEBI:30616"/>
        <dbReference type="ChEBI" id="CHEBI:37563"/>
        <dbReference type="ChEBI" id="CHEBI:43474"/>
        <dbReference type="ChEBI" id="CHEBI:46398"/>
        <dbReference type="ChEBI" id="CHEBI:456216"/>
    </reaction>
</comment>
<comment type="activity regulation">
    <text evidence="1">Allosterically activated by GTP, when glutamine is the substrate; GTP has no effect on the reaction when ammonia is the substrate. The allosteric effector GTP functions by stabilizing the protein conformation that binds the tetrahedral intermediate(s) formed during glutamine hydrolysis. Inhibited by the product CTP, via allosteric rather than competitive inhibition.</text>
</comment>
<comment type="pathway">
    <text evidence="1">Pyrimidine metabolism; CTP biosynthesis via de novo pathway; CTP from UDP: step 2/2.</text>
</comment>
<comment type="subunit">
    <text evidence="1">Homotetramer.</text>
</comment>
<comment type="miscellaneous">
    <text evidence="1">CTPSs have evolved a hybrid strategy for distinguishing between UTP and CTP. The overlapping regions of the product feedback inhibitory and substrate sites recognize a common feature in both compounds, the triphosphate moiety. To differentiate isosteric substrate and product pyrimidine rings, an additional pocket far from the expected kinase/ligase catalytic site, specifically recognizes the cytosine and ribose portions of the product inhibitor.</text>
</comment>
<comment type="similarity">
    <text evidence="1">Belongs to the CTP synthase family.</text>
</comment>
<sequence length="535" mass="59811">MTKYIFVTGGVVSSLGKGITAASLGRLLKNRGLNVTIQKFDPYINVDPGTMSPYQHGEVFVTDDGAETDLDLGHYERFIDINLNKYSNVTTGKIYSSVLQKERRGEYLGGTVQVIPHITNEIKERVYRSGRETNADVVITEIGGTVGDIESLPFLEAIRQIKSDIGRDNVMYIHCTLIPYLKAAGEMKTKPTQHSVKELRSLGIQPNIIVVRTEMPVSQDMKDKLALFCDIDTKAVIEARDADTLYAVPLSLQEQNMDQIVCDHLKLDNPAADMTEWTALVEKVRNLSKKTKIALVGKYVELQDAYISVVEALRHAGYSFDTDVEVKWVNAEHVTAENVQELVGDTDGILVPGGFGDRGVEGKIVAIQYARENKVPFLGICLGMQLASIEFARNVLGLEGANSSEINPDTPYAIIDLLPEQKDVEDLGGTLRLGLYPCKLSEETNAYNAYNEPVVYERHRHRYEFNNQFRPDMEKEGFVFSGTSPDGRLVEIIELKDHPWFVAAQFHPELVSRPNRPQPLFHDFVKASITNKESK</sequence>
<reference key="1">
    <citation type="journal article" date="2007" name="J. Bacteriol.">
        <title>The complete genome sequence of Bacillus thuringiensis Al Hakam.</title>
        <authorList>
            <person name="Challacombe J.F."/>
            <person name="Altherr M.R."/>
            <person name="Xie G."/>
            <person name="Bhotika S.S."/>
            <person name="Brown N."/>
            <person name="Bruce D."/>
            <person name="Campbell C.S."/>
            <person name="Campbell M.L."/>
            <person name="Chen J."/>
            <person name="Chertkov O."/>
            <person name="Cleland C."/>
            <person name="Dimitrijevic M."/>
            <person name="Doggett N.A."/>
            <person name="Fawcett J.J."/>
            <person name="Glavina T."/>
            <person name="Goodwin L.A."/>
            <person name="Green L.D."/>
            <person name="Han C.S."/>
            <person name="Hill K.K."/>
            <person name="Hitchcock P."/>
            <person name="Jackson P.J."/>
            <person name="Keim P."/>
            <person name="Kewalramani A.R."/>
            <person name="Longmire J."/>
            <person name="Lucas S."/>
            <person name="Malfatti S."/>
            <person name="Martinez D."/>
            <person name="McMurry K."/>
            <person name="Meincke L.J."/>
            <person name="Misra M."/>
            <person name="Moseman B.L."/>
            <person name="Mundt M."/>
            <person name="Munk A.C."/>
            <person name="Okinaka R.T."/>
            <person name="Parson-Quintana B."/>
            <person name="Reilly L.P."/>
            <person name="Richardson P."/>
            <person name="Robinson D.L."/>
            <person name="Saunders E."/>
            <person name="Tapia R."/>
            <person name="Tesmer J.G."/>
            <person name="Thayer N."/>
            <person name="Thompson L.S."/>
            <person name="Tice H."/>
            <person name="Ticknor L.O."/>
            <person name="Wills P.L."/>
            <person name="Gilna P."/>
            <person name="Brettin T.S."/>
        </authorList>
    </citation>
    <scope>NUCLEOTIDE SEQUENCE [LARGE SCALE GENOMIC DNA]</scope>
    <source>
        <strain>Al Hakam</strain>
    </source>
</reference>
<dbReference type="EC" id="6.3.4.2" evidence="1"/>
<dbReference type="EMBL" id="CP000485">
    <property type="protein sequence ID" value="ABK88016.1"/>
    <property type="molecule type" value="Genomic_DNA"/>
</dbReference>
<dbReference type="RefSeq" id="WP_000170458.1">
    <property type="nucleotide sequence ID" value="NC_008600.1"/>
</dbReference>
<dbReference type="SMR" id="A0RLC3"/>
<dbReference type="KEGG" id="btl:BALH_4836"/>
<dbReference type="HOGENOM" id="CLU_011675_5_0_9"/>
<dbReference type="UniPathway" id="UPA00159">
    <property type="reaction ID" value="UER00277"/>
</dbReference>
<dbReference type="GO" id="GO:0005829">
    <property type="term" value="C:cytosol"/>
    <property type="evidence" value="ECO:0007669"/>
    <property type="project" value="TreeGrafter"/>
</dbReference>
<dbReference type="GO" id="GO:0005524">
    <property type="term" value="F:ATP binding"/>
    <property type="evidence" value="ECO:0007669"/>
    <property type="project" value="UniProtKB-KW"/>
</dbReference>
<dbReference type="GO" id="GO:0003883">
    <property type="term" value="F:CTP synthase activity"/>
    <property type="evidence" value="ECO:0007669"/>
    <property type="project" value="UniProtKB-UniRule"/>
</dbReference>
<dbReference type="GO" id="GO:0004359">
    <property type="term" value="F:glutaminase activity"/>
    <property type="evidence" value="ECO:0007669"/>
    <property type="project" value="RHEA"/>
</dbReference>
<dbReference type="GO" id="GO:0042802">
    <property type="term" value="F:identical protein binding"/>
    <property type="evidence" value="ECO:0007669"/>
    <property type="project" value="TreeGrafter"/>
</dbReference>
<dbReference type="GO" id="GO:0046872">
    <property type="term" value="F:metal ion binding"/>
    <property type="evidence" value="ECO:0007669"/>
    <property type="project" value="UniProtKB-KW"/>
</dbReference>
<dbReference type="GO" id="GO:0044210">
    <property type="term" value="P:'de novo' CTP biosynthetic process"/>
    <property type="evidence" value="ECO:0007669"/>
    <property type="project" value="UniProtKB-UniRule"/>
</dbReference>
<dbReference type="GO" id="GO:0019856">
    <property type="term" value="P:pyrimidine nucleobase biosynthetic process"/>
    <property type="evidence" value="ECO:0007669"/>
    <property type="project" value="TreeGrafter"/>
</dbReference>
<dbReference type="CDD" id="cd03113">
    <property type="entry name" value="CTPS_N"/>
    <property type="match status" value="1"/>
</dbReference>
<dbReference type="CDD" id="cd01746">
    <property type="entry name" value="GATase1_CTP_Synthase"/>
    <property type="match status" value="1"/>
</dbReference>
<dbReference type="FunFam" id="3.40.50.300:FF:000009">
    <property type="entry name" value="CTP synthase"/>
    <property type="match status" value="1"/>
</dbReference>
<dbReference type="FunFam" id="3.40.50.880:FF:000002">
    <property type="entry name" value="CTP synthase"/>
    <property type="match status" value="1"/>
</dbReference>
<dbReference type="Gene3D" id="3.40.50.880">
    <property type="match status" value="1"/>
</dbReference>
<dbReference type="Gene3D" id="3.40.50.300">
    <property type="entry name" value="P-loop containing nucleotide triphosphate hydrolases"/>
    <property type="match status" value="1"/>
</dbReference>
<dbReference type="HAMAP" id="MF_01227">
    <property type="entry name" value="PyrG"/>
    <property type="match status" value="1"/>
</dbReference>
<dbReference type="InterPro" id="IPR029062">
    <property type="entry name" value="Class_I_gatase-like"/>
</dbReference>
<dbReference type="InterPro" id="IPR004468">
    <property type="entry name" value="CTP_synthase"/>
</dbReference>
<dbReference type="InterPro" id="IPR017456">
    <property type="entry name" value="CTP_synthase_N"/>
</dbReference>
<dbReference type="InterPro" id="IPR017926">
    <property type="entry name" value="GATASE"/>
</dbReference>
<dbReference type="InterPro" id="IPR033828">
    <property type="entry name" value="GATase1_CTP_Synthase"/>
</dbReference>
<dbReference type="InterPro" id="IPR027417">
    <property type="entry name" value="P-loop_NTPase"/>
</dbReference>
<dbReference type="NCBIfam" id="NF003792">
    <property type="entry name" value="PRK05380.1"/>
    <property type="match status" value="1"/>
</dbReference>
<dbReference type="NCBIfam" id="TIGR00337">
    <property type="entry name" value="PyrG"/>
    <property type="match status" value="1"/>
</dbReference>
<dbReference type="PANTHER" id="PTHR11550">
    <property type="entry name" value="CTP SYNTHASE"/>
    <property type="match status" value="1"/>
</dbReference>
<dbReference type="PANTHER" id="PTHR11550:SF0">
    <property type="entry name" value="CTP SYNTHASE-RELATED"/>
    <property type="match status" value="1"/>
</dbReference>
<dbReference type="Pfam" id="PF06418">
    <property type="entry name" value="CTP_synth_N"/>
    <property type="match status" value="1"/>
</dbReference>
<dbReference type="Pfam" id="PF00117">
    <property type="entry name" value="GATase"/>
    <property type="match status" value="1"/>
</dbReference>
<dbReference type="SUPFAM" id="SSF52317">
    <property type="entry name" value="Class I glutamine amidotransferase-like"/>
    <property type="match status" value="1"/>
</dbReference>
<dbReference type="SUPFAM" id="SSF52540">
    <property type="entry name" value="P-loop containing nucleoside triphosphate hydrolases"/>
    <property type="match status" value="1"/>
</dbReference>
<dbReference type="PROSITE" id="PS51273">
    <property type="entry name" value="GATASE_TYPE_1"/>
    <property type="match status" value="1"/>
</dbReference>
<accession>A0RLC3</accession>
<feature type="chain" id="PRO_1000139378" description="CTP synthase">
    <location>
        <begin position="1"/>
        <end position="535"/>
    </location>
</feature>
<feature type="domain" description="Glutamine amidotransferase type-1" evidence="1">
    <location>
        <begin position="292"/>
        <end position="534"/>
    </location>
</feature>
<feature type="region of interest" description="Amidoligase domain" evidence="1">
    <location>
        <begin position="1"/>
        <end position="267"/>
    </location>
</feature>
<feature type="active site" description="Nucleophile; for glutamine hydrolysis" evidence="1">
    <location>
        <position position="381"/>
    </location>
</feature>
<feature type="active site" evidence="1">
    <location>
        <position position="507"/>
    </location>
</feature>
<feature type="active site" evidence="1">
    <location>
        <position position="509"/>
    </location>
</feature>
<feature type="binding site" evidence="1">
    <location>
        <position position="13"/>
    </location>
    <ligand>
        <name>CTP</name>
        <dbReference type="ChEBI" id="CHEBI:37563"/>
        <note>allosteric inhibitor</note>
    </ligand>
</feature>
<feature type="binding site" evidence="1">
    <location>
        <position position="13"/>
    </location>
    <ligand>
        <name>UTP</name>
        <dbReference type="ChEBI" id="CHEBI:46398"/>
    </ligand>
</feature>
<feature type="binding site" evidence="1">
    <location>
        <begin position="14"/>
        <end position="19"/>
    </location>
    <ligand>
        <name>ATP</name>
        <dbReference type="ChEBI" id="CHEBI:30616"/>
    </ligand>
</feature>
<feature type="binding site" evidence="1">
    <location>
        <position position="54"/>
    </location>
    <ligand>
        <name>L-glutamine</name>
        <dbReference type="ChEBI" id="CHEBI:58359"/>
    </ligand>
</feature>
<feature type="binding site" evidence="1">
    <location>
        <position position="71"/>
    </location>
    <ligand>
        <name>ATP</name>
        <dbReference type="ChEBI" id="CHEBI:30616"/>
    </ligand>
</feature>
<feature type="binding site" evidence="1">
    <location>
        <position position="71"/>
    </location>
    <ligand>
        <name>Mg(2+)</name>
        <dbReference type="ChEBI" id="CHEBI:18420"/>
    </ligand>
</feature>
<feature type="binding site" evidence="1">
    <location>
        <position position="141"/>
    </location>
    <ligand>
        <name>Mg(2+)</name>
        <dbReference type="ChEBI" id="CHEBI:18420"/>
    </ligand>
</feature>
<feature type="binding site" evidence="1">
    <location>
        <begin position="148"/>
        <end position="150"/>
    </location>
    <ligand>
        <name>CTP</name>
        <dbReference type="ChEBI" id="CHEBI:37563"/>
        <note>allosteric inhibitor</note>
    </ligand>
</feature>
<feature type="binding site" evidence="1">
    <location>
        <begin position="188"/>
        <end position="193"/>
    </location>
    <ligand>
        <name>CTP</name>
        <dbReference type="ChEBI" id="CHEBI:37563"/>
        <note>allosteric inhibitor</note>
    </ligand>
</feature>
<feature type="binding site" evidence="1">
    <location>
        <begin position="188"/>
        <end position="193"/>
    </location>
    <ligand>
        <name>UTP</name>
        <dbReference type="ChEBI" id="CHEBI:46398"/>
    </ligand>
</feature>
<feature type="binding site" evidence="1">
    <location>
        <position position="224"/>
    </location>
    <ligand>
        <name>CTP</name>
        <dbReference type="ChEBI" id="CHEBI:37563"/>
        <note>allosteric inhibitor</note>
    </ligand>
</feature>
<feature type="binding site" evidence="1">
    <location>
        <position position="224"/>
    </location>
    <ligand>
        <name>UTP</name>
        <dbReference type="ChEBI" id="CHEBI:46398"/>
    </ligand>
</feature>
<feature type="binding site" evidence="1">
    <location>
        <begin position="240"/>
        <end position="242"/>
    </location>
    <ligand>
        <name>ATP</name>
        <dbReference type="ChEBI" id="CHEBI:30616"/>
    </ligand>
</feature>
<feature type="binding site" evidence="1">
    <location>
        <position position="354"/>
    </location>
    <ligand>
        <name>L-glutamine</name>
        <dbReference type="ChEBI" id="CHEBI:58359"/>
    </ligand>
</feature>
<feature type="binding site" evidence="1">
    <location>
        <begin position="382"/>
        <end position="385"/>
    </location>
    <ligand>
        <name>L-glutamine</name>
        <dbReference type="ChEBI" id="CHEBI:58359"/>
    </ligand>
</feature>
<feature type="binding site" evidence="1">
    <location>
        <position position="405"/>
    </location>
    <ligand>
        <name>L-glutamine</name>
        <dbReference type="ChEBI" id="CHEBI:58359"/>
    </ligand>
</feature>
<feature type="binding site" evidence="1">
    <location>
        <position position="462"/>
    </location>
    <ligand>
        <name>L-glutamine</name>
        <dbReference type="ChEBI" id="CHEBI:58359"/>
    </ligand>
</feature>